<accession>A7FRK3</accession>
<feature type="chain" id="PRO_0000315256" description="UPF0316 protein CLB_0632">
    <location>
        <begin position="1"/>
        <end position="170"/>
    </location>
</feature>
<feature type="transmembrane region" description="Helical" evidence="1">
    <location>
        <begin position="1"/>
        <end position="21"/>
    </location>
</feature>
<feature type="transmembrane region" description="Helical" evidence="1">
    <location>
        <begin position="36"/>
        <end position="56"/>
    </location>
</feature>
<organism>
    <name type="scientific">Clostridium botulinum (strain ATCC 19397 / Type A)</name>
    <dbReference type="NCBI Taxonomy" id="441770"/>
    <lineage>
        <taxon>Bacteria</taxon>
        <taxon>Bacillati</taxon>
        <taxon>Bacillota</taxon>
        <taxon>Clostridia</taxon>
        <taxon>Eubacteriales</taxon>
        <taxon>Clostridiaceae</taxon>
        <taxon>Clostridium</taxon>
    </lineage>
</organism>
<protein>
    <recommendedName>
        <fullName evidence="1">UPF0316 protein CLB_0632</fullName>
    </recommendedName>
</protein>
<gene>
    <name type="ordered locus">CLB_0632</name>
</gene>
<name>Y632_CLOB1</name>
<dbReference type="EMBL" id="CP000726">
    <property type="protein sequence ID" value="ABS33854.1"/>
    <property type="molecule type" value="Genomic_DNA"/>
</dbReference>
<dbReference type="RefSeq" id="WP_003357138.1">
    <property type="nucleotide sequence ID" value="NC_009697.1"/>
</dbReference>
<dbReference type="SMR" id="A7FRK3"/>
<dbReference type="KEGG" id="cba:CLB_0632"/>
<dbReference type="HOGENOM" id="CLU_106166_0_0_9"/>
<dbReference type="GO" id="GO:0005886">
    <property type="term" value="C:plasma membrane"/>
    <property type="evidence" value="ECO:0007669"/>
    <property type="project" value="UniProtKB-SubCell"/>
</dbReference>
<dbReference type="CDD" id="cd16381">
    <property type="entry name" value="YitT_C_like_1"/>
    <property type="match status" value="1"/>
</dbReference>
<dbReference type="HAMAP" id="MF_01515">
    <property type="entry name" value="UPF0316"/>
    <property type="match status" value="1"/>
</dbReference>
<dbReference type="InterPro" id="IPR019264">
    <property type="entry name" value="DUF2179"/>
</dbReference>
<dbReference type="InterPro" id="IPR044035">
    <property type="entry name" value="DUF5698"/>
</dbReference>
<dbReference type="InterPro" id="IPR022930">
    <property type="entry name" value="UPF0316"/>
</dbReference>
<dbReference type="PANTHER" id="PTHR40060">
    <property type="entry name" value="UPF0316 PROTEIN YEBE"/>
    <property type="match status" value="1"/>
</dbReference>
<dbReference type="PANTHER" id="PTHR40060:SF1">
    <property type="entry name" value="UPF0316 PROTEIN YEBE"/>
    <property type="match status" value="1"/>
</dbReference>
<dbReference type="Pfam" id="PF10035">
    <property type="entry name" value="DUF2179"/>
    <property type="match status" value="1"/>
</dbReference>
<dbReference type="Pfam" id="PF18955">
    <property type="entry name" value="DUF5698"/>
    <property type="match status" value="1"/>
</dbReference>
<sequence>MLSYYAFIFFAKIMEVALMTIRTVLITRGEKLYGSIIGFIEVTIWLYVTSSVLSGIKDDPIRMVVYALGFTCGNYMGCVIEEKLAIGLLTINVITSESDGKRLAEILRDENVGVTMVDAEGKIEQKKMLIIHAKRKRREEIIRTIEGSDINAMISVNDIKTVYGGYGIRK</sequence>
<keyword id="KW-1003">Cell membrane</keyword>
<keyword id="KW-0472">Membrane</keyword>
<keyword id="KW-0812">Transmembrane</keyword>
<keyword id="KW-1133">Transmembrane helix</keyword>
<comment type="subcellular location">
    <subcellularLocation>
        <location evidence="1">Cell membrane</location>
        <topology evidence="1">Multi-pass membrane protein</topology>
    </subcellularLocation>
</comment>
<comment type="similarity">
    <text evidence="1">Belongs to the UPF0316 family.</text>
</comment>
<evidence type="ECO:0000255" key="1">
    <source>
        <dbReference type="HAMAP-Rule" id="MF_01515"/>
    </source>
</evidence>
<proteinExistence type="inferred from homology"/>
<reference key="1">
    <citation type="journal article" date="2007" name="PLoS ONE">
        <title>Analysis of the neurotoxin complex genes in Clostridium botulinum A1-A4 and B1 strains: BoNT/A3, /Ba4 and /B1 clusters are located within plasmids.</title>
        <authorList>
            <person name="Smith T.J."/>
            <person name="Hill K.K."/>
            <person name="Foley B.T."/>
            <person name="Detter J.C."/>
            <person name="Munk A.C."/>
            <person name="Bruce D.C."/>
            <person name="Doggett N.A."/>
            <person name="Smith L.A."/>
            <person name="Marks J.D."/>
            <person name="Xie G."/>
            <person name="Brettin T.S."/>
        </authorList>
    </citation>
    <scope>NUCLEOTIDE SEQUENCE [LARGE SCALE GENOMIC DNA]</scope>
    <source>
        <strain>ATCC 19397 / Type A</strain>
    </source>
</reference>